<evidence type="ECO:0000250" key="1">
    <source>
        <dbReference type="UniProtKB" id="P06873"/>
    </source>
</evidence>
<evidence type="ECO:0000255" key="2"/>
<evidence type="ECO:0000255" key="3">
    <source>
        <dbReference type="PROSITE-ProRule" id="PRU01240"/>
    </source>
</evidence>
<evidence type="ECO:0000255" key="4">
    <source>
        <dbReference type="PROSITE-ProRule" id="PRU10080"/>
    </source>
</evidence>
<evidence type="ECO:0000255" key="5">
    <source>
        <dbReference type="PROSITE-ProRule" id="PRU10081"/>
    </source>
</evidence>
<evidence type="ECO:0000255" key="6">
    <source>
        <dbReference type="PROSITE-ProRule" id="PRU10082"/>
    </source>
</evidence>
<evidence type="ECO:0000269" key="7">
    <source>
    </source>
</evidence>
<evidence type="ECO:0000303" key="8">
    <source>
    </source>
</evidence>
<evidence type="ECO:0000305" key="9"/>
<feature type="chain" id="PRO_0000291532" description="Subtilisin-like serine protease AS-E1">
    <location>
        <begin position="1"/>
        <end position="40" status="greater than"/>
    </location>
</feature>
<feature type="domain" description="Peptidase S8" evidence="3">
    <location>
        <begin position="4"/>
        <end position="40" status="greater than"/>
    </location>
</feature>
<feature type="active site" description="Charge relay system" evidence="1 4 5 6">
    <location>
        <position position="36"/>
    </location>
</feature>
<feature type="non-terminal residue" evidence="8">
    <location>
        <position position="40"/>
    </location>
</feature>
<keyword id="KW-0903">Direct protein sequencing</keyword>
<keyword id="KW-0378">Hydrolase</keyword>
<keyword id="KW-0645">Protease</keyword>
<keyword id="KW-0655">Prothrombin activator</keyword>
<keyword id="KW-0720">Serine protease</keyword>
<accession>P85156</accession>
<name>ASE1_ACRSP</name>
<protein>
    <recommendedName>
        <fullName>Subtilisin-like serine protease AS-E1</fullName>
        <ecNumber>3.4.21.-</ecNumber>
    </recommendedName>
</protein>
<dbReference type="EC" id="3.4.21.-"/>
<dbReference type="SMR" id="P85156"/>
<dbReference type="GO" id="GO:0016504">
    <property type="term" value="F:peptidase activator activity"/>
    <property type="evidence" value="ECO:0007669"/>
    <property type="project" value="UniProtKB-KW"/>
</dbReference>
<dbReference type="GO" id="GO:0004252">
    <property type="term" value="F:serine-type endopeptidase activity"/>
    <property type="evidence" value="ECO:0007669"/>
    <property type="project" value="InterPro"/>
</dbReference>
<dbReference type="GO" id="GO:0006508">
    <property type="term" value="P:proteolysis"/>
    <property type="evidence" value="ECO:0007669"/>
    <property type="project" value="UniProtKB-KW"/>
</dbReference>
<dbReference type="Gene3D" id="3.40.50.200">
    <property type="entry name" value="Peptidase S8/S53 domain"/>
    <property type="match status" value="1"/>
</dbReference>
<dbReference type="InterPro" id="IPR036852">
    <property type="entry name" value="Peptidase_S8/S53_dom_sf"/>
</dbReference>
<dbReference type="SUPFAM" id="SSF52743">
    <property type="entry name" value="Subtilisin-like"/>
    <property type="match status" value="1"/>
</dbReference>
<dbReference type="PROSITE" id="PS51892">
    <property type="entry name" value="SUBTILASE"/>
    <property type="match status" value="1"/>
</dbReference>
<proteinExistence type="evidence at protein level"/>
<comment type="function">
    <text evidence="7">Subtilisin-like serine protease. Cleaves prothrombin at 155-Arg-|-Ser-156, 45-Thr-|-Ala-46 and 316-Tyr-|-Ile-317 to produce meizothrombin(desF1)-like molecules. Degrades fibrinogen. Inhibits plasma coagulation.</text>
</comment>
<comment type="activity regulation">
    <text evidence="7">Strongly inhibited by antipain and PMSF. Inhibited by benzamidine and aprotinin by 80% and 17% respectively. Little or no inhibition by EDTA, E-64, iodoacetic acid, leupeptin and FUT-175.</text>
</comment>
<comment type="biophysicochemical properties">
    <phDependence>
        <text evidence="7">Optimum pH is 8.0. Retains over 50% of its activity after treatment for 20 minutes between pH 7.0 and 11.0. Inactivated by treatment at pH 13.0 and at pH values less than 5.0.</text>
    </phDependence>
    <temperatureDependence>
        <text evidence="7">Optimum temperature is 55 degrees Celsius. Stable from 25 to 40 degrees Celsius. Activity is reduced considerably by incubation above 40 degrees Celsius for 20 min.</text>
    </temperatureDependence>
</comment>
<comment type="subunit">
    <text evidence="7">Homodimer.</text>
</comment>
<comment type="similarity">
    <text evidence="2">Belongs to the peptidase S8 family.</text>
</comment>
<reference evidence="9" key="1">
    <citation type="journal article" date="2007" name="Biochem. Biophys. Res. Commun.">
        <title>Activation of prothrombin by two subtilisin-like serine proteases from Acremonium sp.</title>
        <authorList>
            <person name="Liu C."/>
            <person name="Matsushita Y."/>
            <person name="Shimizu K."/>
            <person name="Makimura K."/>
            <person name="Hasumi K."/>
        </authorList>
    </citation>
    <scope>PROTEIN SEQUENCE</scope>
    <scope>FUNCTION</scope>
    <scope>ACTIVITY REGULATION</scope>
    <scope>BIOPHYSICOCHEMICAL PROPERTIES</scope>
    <scope>SUBUNIT</scope>
    <source>
        <strain evidence="7">F11177</strain>
    </source>
</reference>
<organism>
    <name type="scientific">Acremonium sp</name>
    <dbReference type="NCBI Taxonomy" id="2046025"/>
    <lineage>
        <taxon>Eukaryota</taxon>
        <taxon>Fungi</taxon>
        <taxon>Dikarya</taxon>
        <taxon>Ascomycota</taxon>
        <taxon>Pezizomycotina</taxon>
        <taxon>Sordariomycetes</taxon>
        <taxon>Hypocreomycetidae</taxon>
        <taxon>Hypocreales</taxon>
        <taxon>Hypocreales incertae sedis</taxon>
        <taxon>Acremonium</taxon>
    </lineage>
</organism>
<sequence>DNVPWGLARISHRTTGATSYVYDDSAGEGTCSYIIDTGIY</sequence>